<evidence type="ECO:0000250" key="1"/>
<evidence type="ECO:0000305" key="2"/>
<accession>Q9X215</accession>
<protein>
    <recommendedName>
        <fullName>Guanylate kinase</fullName>
        <ecNumber>2.7.4.8</ecNumber>
    </recommendedName>
    <alternativeName>
        <fullName>GMP kinase</fullName>
    </alternativeName>
</protein>
<feature type="chain" id="PRO_0000170630" description="Guanylate kinase">
    <location>
        <begin position="1"/>
        <end position="207"/>
    </location>
</feature>
<feature type="domain" description="Guanylate kinase-like">
    <location>
        <begin position="3"/>
        <end position="181"/>
    </location>
</feature>
<feature type="binding site" evidence="1">
    <location>
        <begin position="10"/>
        <end position="17"/>
    </location>
    <ligand>
        <name>ATP</name>
        <dbReference type="ChEBI" id="CHEBI:30616"/>
    </ligand>
</feature>
<comment type="function">
    <text evidence="1">Essential for recycling GMP and indirectly, cGMP.</text>
</comment>
<comment type="catalytic activity">
    <reaction>
        <text>GMP + ATP = GDP + ADP</text>
        <dbReference type="Rhea" id="RHEA:20780"/>
        <dbReference type="ChEBI" id="CHEBI:30616"/>
        <dbReference type="ChEBI" id="CHEBI:58115"/>
        <dbReference type="ChEBI" id="CHEBI:58189"/>
        <dbReference type="ChEBI" id="CHEBI:456216"/>
        <dbReference type="EC" id="2.7.4.8"/>
    </reaction>
</comment>
<comment type="subcellular location">
    <subcellularLocation>
        <location evidence="1">Cytoplasm</location>
    </subcellularLocation>
</comment>
<comment type="similarity">
    <text evidence="2">Belongs to the guanylate kinase family.</text>
</comment>
<keyword id="KW-0067">ATP-binding</keyword>
<keyword id="KW-0963">Cytoplasm</keyword>
<keyword id="KW-0418">Kinase</keyword>
<keyword id="KW-0547">Nucleotide-binding</keyword>
<keyword id="KW-1185">Reference proteome</keyword>
<keyword id="KW-0808">Transferase</keyword>
<gene>
    <name type="primary">gmk</name>
    <name type="ordered locus">TM_1689</name>
</gene>
<proteinExistence type="inferred from homology"/>
<dbReference type="EC" id="2.7.4.8"/>
<dbReference type="EMBL" id="AE000512">
    <property type="protein sequence ID" value="AAD36756.1"/>
    <property type="molecule type" value="Genomic_DNA"/>
</dbReference>
<dbReference type="PIR" id="C72223">
    <property type="entry name" value="C72223"/>
</dbReference>
<dbReference type="RefSeq" id="NP_229489.1">
    <property type="nucleotide sequence ID" value="NC_000853.1"/>
</dbReference>
<dbReference type="RefSeq" id="WP_004082205.1">
    <property type="nucleotide sequence ID" value="NZ_CP011107.1"/>
</dbReference>
<dbReference type="SMR" id="Q9X215"/>
<dbReference type="FunCoup" id="Q9X215">
    <property type="interactions" value="319"/>
</dbReference>
<dbReference type="STRING" id="243274.TM_1689"/>
<dbReference type="PaxDb" id="243274-THEMA_05795"/>
<dbReference type="EnsemblBacteria" id="AAD36756">
    <property type="protein sequence ID" value="AAD36756"/>
    <property type="gene ID" value="TM_1689"/>
</dbReference>
<dbReference type="KEGG" id="tma:TM1689"/>
<dbReference type="KEGG" id="tmi:THEMA_05795"/>
<dbReference type="KEGG" id="tmm:Tmari_1697"/>
<dbReference type="KEGG" id="tmw:THMA_1731"/>
<dbReference type="eggNOG" id="COG0194">
    <property type="taxonomic scope" value="Bacteria"/>
</dbReference>
<dbReference type="InParanoid" id="Q9X215"/>
<dbReference type="OrthoDB" id="9808150at2"/>
<dbReference type="Proteomes" id="UP000008183">
    <property type="component" value="Chromosome"/>
</dbReference>
<dbReference type="GO" id="GO:0005829">
    <property type="term" value="C:cytosol"/>
    <property type="evidence" value="ECO:0000318"/>
    <property type="project" value="GO_Central"/>
</dbReference>
<dbReference type="GO" id="GO:0005524">
    <property type="term" value="F:ATP binding"/>
    <property type="evidence" value="ECO:0007669"/>
    <property type="project" value="UniProtKB-UniRule"/>
</dbReference>
<dbReference type="GO" id="GO:0016887">
    <property type="term" value="F:ATP hydrolysis activity"/>
    <property type="evidence" value="ECO:0007669"/>
    <property type="project" value="InterPro"/>
</dbReference>
<dbReference type="GO" id="GO:0004385">
    <property type="term" value="F:guanylate kinase activity"/>
    <property type="evidence" value="ECO:0000318"/>
    <property type="project" value="GO_Central"/>
</dbReference>
<dbReference type="CDD" id="cd00071">
    <property type="entry name" value="GMPK"/>
    <property type="match status" value="1"/>
</dbReference>
<dbReference type="FunFam" id="3.30.63.10:FF:000005">
    <property type="entry name" value="Guanylate kinase"/>
    <property type="match status" value="1"/>
</dbReference>
<dbReference type="Gene3D" id="3.30.63.10">
    <property type="entry name" value="Guanylate Kinase phosphate binding domain"/>
    <property type="match status" value="1"/>
</dbReference>
<dbReference type="Gene3D" id="3.40.50.300">
    <property type="entry name" value="P-loop containing nucleotide triphosphate hydrolases"/>
    <property type="match status" value="1"/>
</dbReference>
<dbReference type="HAMAP" id="MF_00328">
    <property type="entry name" value="Guanylate_kinase"/>
    <property type="match status" value="1"/>
</dbReference>
<dbReference type="InterPro" id="IPR003593">
    <property type="entry name" value="AAA+_ATPase"/>
</dbReference>
<dbReference type="InterPro" id="IPR008145">
    <property type="entry name" value="GK/Ca_channel_bsu"/>
</dbReference>
<dbReference type="InterPro" id="IPR008144">
    <property type="entry name" value="Guanylate_kin-like_dom"/>
</dbReference>
<dbReference type="InterPro" id="IPR017665">
    <property type="entry name" value="Guanylate_kinase"/>
</dbReference>
<dbReference type="InterPro" id="IPR020590">
    <property type="entry name" value="Guanylate_kinase_CS"/>
</dbReference>
<dbReference type="InterPro" id="IPR027417">
    <property type="entry name" value="P-loop_NTPase"/>
</dbReference>
<dbReference type="NCBIfam" id="TIGR03263">
    <property type="entry name" value="guanyl_kin"/>
    <property type="match status" value="1"/>
</dbReference>
<dbReference type="PANTHER" id="PTHR23117:SF13">
    <property type="entry name" value="GUANYLATE KINASE"/>
    <property type="match status" value="1"/>
</dbReference>
<dbReference type="PANTHER" id="PTHR23117">
    <property type="entry name" value="GUANYLATE KINASE-RELATED"/>
    <property type="match status" value="1"/>
</dbReference>
<dbReference type="Pfam" id="PF00625">
    <property type="entry name" value="Guanylate_kin"/>
    <property type="match status" value="1"/>
</dbReference>
<dbReference type="SMART" id="SM00382">
    <property type="entry name" value="AAA"/>
    <property type="match status" value="1"/>
</dbReference>
<dbReference type="SMART" id="SM00072">
    <property type="entry name" value="GuKc"/>
    <property type="match status" value="1"/>
</dbReference>
<dbReference type="SUPFAM" id="SSF52540">
    <property type="entry name" value="P-loop containing nucleoside triphosphate hydrolases"/>
    <property type="match status" value="1"/>
</dbReference>
<dbReference type="PROSITE" id="PS00856">
    <property type="entry name" value="GUANYLATE_KINASE_1"/>
    <property type="match status" value="1"/>
</dbReference>
<dbReference type="PROSITE" id="PS50052">
    <property type="entry name" value="GUANYLATE_KINASE_2"/>
    <property type="match status" value="1"/>
</dbReference>
<sequence>MKGQLFVICGPSGAGKTSIIKEVLKRLDNVVFSVSCTTRPKRPHEEDGKDYFFITEEEFLKRVERGEFLEWARVHGHLYGTLRSFVESHINEGKDVVLDIDVQGALSVKKKYSNTVFIYVAPPSYADLRERILKRGTEKEADVLVRLENAKWELMFMDEFDYIVVNENLEDAVEMVVSIVRSERAKVTRNQDKIERFKMEVKGWKKL</sequence>
<reference key="1">
    <citation type="journal article" date="1999" name="Nature">
        <title>Evidence for lateral gene transfer between Archaea and Bacteria from genome sequence of Thermotoga maritima.</title>
        <authorList>
            <person name="Nelson K.E."/>
            <person name="Clayton R.A."/>
            <person name="Gill S.R."/>
            <person name="Gwinn M.L."/>
            <person name="Dodson R.J."/>
            <person name="Haft D.H."/>
            <person name="Hickey E.K."/>
            <person name="Peterson J.D."/>
            <person name="Nelson W.C."/>
            <person name="Ketchum K.A."/>
            <person name="McDonald L.A."/>
            <person name="Utterback T.R."/>
            <person name="Malek J.A."/>
            <person name="Linher K.D."/>
            <person name="Garrett M.M."/>
            <person name="Stewart A.M."/>
            <person name="Cotton M.D."/>
            <person name="Pratt M.S."/>
            <person name="Phillips C.A."/>
            <person name="Richardson D.L."/>
            <person name="Heidelberg J.F."/>
            <person name="Sutton G.G."/>
            <person name="Fleischmann R.D."/>
            <person name="Eisen J.A."/>
            <person name="White O."/>
            <person name="Salzberg S.L."/>
            <person name="Smith H.O."/>
            <person name="Venter J.C."/>
            <person name="Fraser C.M."/>
        </authorList>
    </citation>
    <scope>NUCLEOTIDE SEQUENCE [LARGE SCALE GENOMIC DNA]</scope>
    <source>
        <strain>ATCC 43589 / DSM 3109 / JCM 10099 / NBRC 100826 / MSB8</strain>
    </source>
</reference>
<name>KGUA_THEMA</name>
<organism>
    <name type="scientific">Thermotoga maritima (strain ATCC 43589 / DSM 3109 / JCM 10099 / NBRC 100826 / MSB8)</name>
    <dbReference type="NCBI Taxonomy" id="243274"/>
    <lineage>
        <taxon>Bacteria</taxon>
        <taxon>Thermotogati</taxon>
        <taxon>Thermotogota</taxon>
        <taxon>Thermotogae</taxon>
        <taxon>Thermotogales</taxon>
        <taxon>Thermotogaceae</taxon>
        <taxon>Thermotoga</taxon>
    </lineage>
</organism>